<name>FMT_ALLAM</name>
<proteinExistence type="inferred from homology"/>
<keyword id="KW-0648">Protein biosynthesis</keyword>
<keyword id="KW-1185">Reference proteome</keyword>
<keyword id="KW-0808">Transferase</keyword>
<gene>
    <name evidence="1" type="primary">fmt</name>
    <name type="ordered locus">Avi_0541</name>
</gene>
<reference key="1">
    <citation type="journal article" date="2009" name="J. Bacteriol.">
        <title>Genome sequences of three Agrobacterium biovars help elucidate the evolution of multichromosome genomes in bacteria.</title>
        <authorList>
            <person name="Slater S.C."/>
            <person name="Goldman B.S."/>
            <person name="Goodner B."/>
            <person name="Setubal J.C."/>
            <person name="Farrand S.K."/>
            <person name="Nester E.W."/>
            <person name="Burr T.J."/>
            <person name="Banta L."/>
            <person name="Dickerman A.W."/>
            <person name="Paulsen I."/>
            <person name="Otten L."/>
            <person name="Suen G."/>
            <person name="Welch R."/>
            <person name="Almeida N.F."/>
            <person name="Arnold F."/>
            <person name="Burton O.T."/>
            <person name="Du Z."/>
            <person name="Ewing A."/>
            <person name="Godsy E."/>
            <person name="Heisel S."/>
            <person name="Houmiel K.L."/>
            <person name="Jhaveri J."/>
            <person name="Lu J."/>
            <person name="Miller N.M."/>
            <person name="Norton S."/>
            <person name="Chen Q."/>
            <person name="Phoolcharoen W."/>
            <person name="Ohlin V."/>
            <person name="Ondrusek D."/>
            <person name="Pride N."/>
            <person name="Stricklin S.L."/>
            <person name="Sun J."/>
            <person name="Wheeler C."/>
            <person name="Wilson L."/>
            <person name="Zhu H."/>
            <person name="Wood D.W."/>
        </authorList>
    </citation>
    <scope>NUCLEOTIDE SEQUENCE [LARGE SCALE GENOMIC DNA]</scope>
    <source>
        <strain>ATCC BAA-846 / DSM 112012 / S4</strain>
    </source>
</reference>
<organism>
    <name type="scientific">Allorhizobium ampelinum (strain ATCC BAA-846 / DSM 112012 / S4)</name>
    <name type="common">Agrobacterium vitis (strain S4)</name>
    <dbReference type="NCBI Taxonomy" id="311402"/>
    <lineage>
        <taxon>Bacteria</taxon>
        <taxon>Pseudomonadati</taxon>
        <taxon>Pseudomonadota</taxon>
        <taxon>Alphaproteobacteria</taxon>
        <taxon>Hyphomicrobiales</taxon>
        <taxon>Rhizobiaceae</taxon>
        <taxon>Rhizobium/Agrobacterium group</taxon>
        <taxon>Allorhizobium</taxon>
        <taxon>Allorhizobium ampelinum</taxon>
    </lineage>
</organism>
<evidence type="ECO:0000255" key="1">
    <source>
        <dbReference type="HAMAP-Rule" id="MF_00182"/>
    </source>
</evidence>
<accession>B9JQX1</accession>
<protein>
    <recommendedName>
        <fullName evidence="1">Methionyl-tRNA formyltransferase</fullName>
        <ecNumber evidence="1">2.1.2.9</ecNumber>
    </recommendedName>
</protein>
<feature type="chain" id="PRO_1000190000" description="Methionyl-tRNA formyltransferase">
    <location>
        <begin position="1"/>
        <end position="320"/>
    </location>
</feature>
<feature type="binding site" evidence="1">
    <location>
        <begin position="112"/>
        <end position="115"/>
    </location>
    <ligand>
        <name>(6S)-5,6,7,8-tetrahydrofolate</name>
        <dbReference type="ChEBI" id="CHEBI:57453"/>
    </ligand>
</feature>
<sequence length="320" mass="33868">MALRMIFMGTPEFSVPILNALFDAGHQIVAVYSQPPRPAGRRGLDLTKSPVHQQAEKLGLPVLTPLNFKAQDDRDAFAAHQADVAVVVAYGLLLPEAILTGTRLGCYNGHASLLPRWRGAAPIQRAIMAGDVQTGMMVMKMDKGLDTGPVALTRRVTITPDMTAGELHDALSQIGAEAMVEAMAKLEAGDLPLTAQPEDGVVYATKIDKAETRINFSKPATQVHNDIRGLSPFPGAWFEADINGKLERIKVLSSQMAEVTDTANVPGTVLDDALTIACGLGAVRLVRLQKAGGKPLDAAEFLRGTPIGAGTVFASAKAGT</sequence>
<comment type="function">
    <text evidence="1">Attaches a formyl group to the free amino group of methionyl-tRNA(fMet). The formyl group appears to play a dual role in the initiator identity of N-formylmethionyl-tRNA by promoting its recognition by IF2 and preventing the misappropriation of this tRNA by the elongation apparatus.</text>
</comment>
<comment type="catalytic activity">
    <reaction evidence="1">
        <text>L-methionyl-tRNA(fMet) + (6R)-10-formyltetrahydrofolate = N-formyl-L-methionyl-tRNA(fMet) + (6S)-5,6,7,8-tetrahydrofolate + H(+)</text>
        <dbReference type="Rhea" id="RHEA:24380"/>
        <dbReference type="Rhea" id="RHEA-COMP:9952"/>
        <dbReference type="Rhea" id="RHEA-COMP:9953"/>
        <dbReference type="ChEBI" id="CHEBI:15378"/>
        <dbReference type="ChEBI" id="CHEBI:57453"/>
        <dbReference type="ChEBI" id="CHEBI:78530"/>
        <dbReference type="ChEBI" id="CHEBI:78844"/>
        <dbReference type="ChEBI" id="CHEBI:195366"/>
        <dbReference type="EC" id="2.1.2.9"/>
    </reaction>
</comment>
<comment type="similarity">
    <text evidence="1">Belongs to the Fmt family.</text>
</comment>
<dbReference type="EC" id="2.1.2.9" evidence="1"/>
<dbReference type="EMBL" id="CP000633">
    <property type="protein sequence ID" value="ACM35384.1"/>
    <property type="molecule type" value="Genomic_DNA"/>
</dbReference>
<dbReference type="RefSeq" id="WP_015914812.1">
    <property type="nucleotide sequence ID" value="NC_011989.1"/>
</dbReference>
<dbReference type="SMR" id="B9JQX1"/>
<dbReference type="STRING" id="311402.Avi_0541"/>
<dbReference type="KEGG" id="avi:Avi_0541"/>
<dbReference type="eggNOG" id="COG0223">
    <property type="taxonomic scope" value="Bacteria"/>
</dbReference>
<dbReference type="HOGENOM" id="CLU_033347_1_2_5"/>
<dbReference type="Proteomes" id="UP000001596">
    <property type="component" value="Chromosome 1"/>
</dbReference>
<dbReference type="GO" id="GO:0005829">
    <property type="term" value="C:cytosol"/>
    <property type="evidence" value="ECO:0007669"/>
    <property type="project" value="TreeGrafter"/>
</dbReference>
<dbReference type="GO" id="GO:0004479">
    <property type="term" value="F:methionyl-tRNA formyltransferase activity"/>
    <property type="evidence" value="ECO:0007669"/>
    <property type="project" value="UniProtKB-UniRule"/>
</dbReference>
<dbReference type="CDD" id="cd08646">
    <property type="entry name" value="FMT_core_Met-tRNA-FMT_N"/>
    <property type="match status" value="1"/>
</dbReference>
<dbReference type="CDD" id="cd08704">
    <property type="entry name" value="Met_tRNA_FMT_C"/>
    <property type="match status" value="1"/>
</dbReference>
<dbReference type="Gene3D" id="3.40.50.12230">
    <property type="match status" value="1"/>
</dbReference>
<dbReference type="HAMAP" id="MF_00182">
    <property type="entry name" value="Formyl_trans"/>
    <property type="match status" value="1"/>
</dbReference>
<dbReference type="InterPro" id="IPR005794">
    <property type="entry name" value="Fmt"/>
</dbReference>
<dbReference type="InterPro" id="IPR005793">
    <property type="entry name" value="Formyl_trans_C"/>
</dbReference>
<dbReference type="InterPro" id="IPR002376">
    <property type="entry name" value="Formyl_transf_N"/>
</dbReference>
<dbReference type="InterPro" id="IPR036477">
    <property type="entry name" value="Formyl_transf_N_sf"/>
</dbReference>
<dbReference type="InterPro" id="IPR011034">
    <property type="entry name" value="Formyl_transferase-like_C_sf"/>
</dbReference>
<dbReference type="InterPro" id="IPR001555">
    <property type="entry name" value="GART_AS"/>
</dbReference>
<dbReference type="InterPro" id="IPR044135">
    <property type="entry name" value="Met-tRNA-FMT_C"/>
</dbReference>
<dbReference type="InterPro" id="IPR041711">
    <property type="entry name" value="Met-tRNA-FMT_N"/>
</dbReference>
<dbReference type="NCBIfam" id="TIGR00460">
    <property type="entry name" value="fmt"/>
    <property type="match status" value="1"/>
</dbReference>
<dbReference type="PANTHER" id="PTHR11138">
    <property type="entry name" value="METHIONYL-TRNA FORMYLTRANSFERASE"/>
    <property type="match status" value="1"/>
</dbReference>
<dbReference type="PANTHER" id="PTHR11138:SF5">
    <property type="entry name" value="METHIONYL-TRNA FORMYLTRANSFERASE, MITOCHONDRIAL"/>
    <property type="match status" value="1"/>
</dbReference>
<dbReference type="Pfam" id="PF02911">
    <property type="entry name" value="Formyl_trans_C"/>
    <property type="match status" value="1"/>
</dbReference>
<dbReference type="Pfam" id="PF00551">
    <property type="entry name" value="Formyl_trans_N"/>
    <property type="match status" value="1"/>
</dbReference>
<dbReference type="SUPFAM" id="SSF50486">
    <property type="entry name" value="FMT C-terminal domain-like"/>
    <property type="match status" value="1"/>
</dbReference>
<dbReference type="SUPFAM" id="SSF53328">
    <property type="entry name" value="Formyltransferase"/>
    <property type="match status" value="1"/>
</dbReference>
<dbReference type="PROSITE" id="PS00373">
    <property type="entry name" value="GART"/>
    <property type="match status" value="1"/>
</dbReference>